<organism>
    <name type="scientific">Rickettsia montanensis</name>
    <dbReference type="NCBI Taxonomy" id="33991"/>
    <lineage>
        <taxon>Bacteria</taxon>
        <taxon>Pseudomonadati</taxon>
        <taxon>Pseudomonadota</taxon>
        <taxon>Alphaproteobacteria</taxon>
        <taxon>Rickettsiales</taxon>
        <taxon>Rickettsiaceae</taxon>
        <taxon>Rickettsieae</taxon>
        <taxon>Rickettsia</taxon>
        <taxon>spotted fever group</taxon>
    </lineage>
</organism>
<evidence type="ECO:0000255" key="1">
    <source>
        <dbReference type="HAMAP-Rule" id="MF_00418"/>
    </source>
</evidence>
<evidence type="ECO:0000305" key="2"/>
<name>DAPA_RICMO</name>
<keyword id="KW-0028">Amino-acid biosynthesis</keyword>
<keyword id="KW-0963">Cytoplasm</keyword>
<keyword id="KW-0220">Diaminopimelate biosynthesis</keyword>
<keyword id="KW-0456">Lyase</keyword>
<keyword id="KW-0457">Lysine biosynthesis</keyword>
<keyword id="KW-0704">Schiff base</keyword>
<dbReference type="EC" id="4.3.3.7" evidence="1"/>
<dbReference type="EMBL" id="AJ293312">
    <property type="protein sequence ID" value="CAC33594.1"/>
    <property type="molecule type" value="Genomic_DNA"/>
</dbReference>
<dbReference type="SMR" id="Q9AKQ3"/>
<dbReference type="OMA" id="GMDACVP"/>
<dbReference type="UniPathway" id="UPA00034">
    <property type="reaction ID" value="UER00017"/>
</dbReference>
<dbReference type="GO" id="GO:0005737">
    <property type="term" value="C:cytoplasm"/>
    <property type="evidence" value="ECO:0007669"/>
    <property type="project" value="UniProtKB-SubCell"/>
</dbReference>
<dbReference type="GO" id="GO:0008700">
    <property type="term" value="F:(R,S)-4-hydroxy-2-oxoglutarate aldolase activity"/>
    <property type="evidence" value="ECO:0007669"/>
    <property type="project" value="TreeGrafter"/>
</dbReference>
<dbReference type="GO" id="GO:0008840">
    <property type="term" value="F:4-hydroxy-tetrahydrodipicolinate synthase activity"/>
    <property type="evidence" value="ECO:0007669"/>
    <property type="project" value="UniProtKB-UniRule"/>
</dbReference>
<dbReference type="GO" id="GO:0019877">
    <property type="term" value="P:diaminopimelate biosynthetic process"/>
    <property type="evidence" value="ECO:0007669"/>
    <property type="project" value="UniProtKB-UniRule"/>
</dbReference>
<dbReference type="GO" id="GO:0009436">
    <property type="term" value="P:glyoxylate catabolic process"/>
    <property type="evidence" value="ECO:0007669"/>
    <property type="project" value="TreeGrafter"/>
</dbReference>
<dbReference type="GO" id="GO:0009089">
    <property type="term" value="P:lysine biosynthetic process via diaminopimelate"/>
    <property type="evidence" value="ECO:0007669"/>
    <property type="project" value="UniProtKB-UniRule"/>
</dbReference>
<dbReference type="CDD" id="cd00950">
    <property type="entry name" value="DHDPS"/>
    <property type="match status" value="1"/>
</dbReference>
<dbReference type="Gene3D" id="3.20.20.70">
    <property type="entry name" value="Aldolase class I"/>
    <property type="match status" value="1"/>
</dbReference>
<dbReference type="HAMAP" id="MF_00418">
    <property type="entry name" value="DapA"/>
    <property type="match status" value="1"/>
</dbReference>
<dbReference type="InterPro" id="IPR013785">
    <property type="entry name" value="Aldolase_TIM"/>
</dbReference>
<dbReference type="InterPro" id="IPR005263">
    <property type="entry name" value="DapA"/>
</dbReference>
<dbReference type="InterPro" id="IPR002220">
    <property type="entry name" value="DapA-like"/>
</dbReference>
<dbReference type="InterPro" id="IPR020625">
    <property type="entry name" value="Schiff_base-form_aldolases_AS"/>
</dbReference>
<dbReference type="InterPro" id="IPR020624">
    <property type="entry name" value="Schiff_base-form_aldolases_CS"/>
</dbReference>
<dbReference type="NCBIfam" id="TIGR00674">
    <property type="entry name" value="dapA"/>
    <property type="match status" value="1"/>
</dbReference>
<dbReference type="PANTHER" id="PTHR12128:SF66">
    <property type="entry name" value="4-HYDROXY-2-OXOGLUTARATE ALDOLASE, MITOCHONDRIAL"/>
    <property type="match status" value="1"/>
</dbReference>
<dbReference type="PANTHER" id="PTHR12128">
    <property type="entry name" value="DIHYDRODIPICOLINATE SYNTHASE"/>
    <property type="match status" value="1"/>
</dbReference>
<dbReference type="Pfam" id="PF00701">
    <property type="entry name" value="DHDPS"/>
    <property type="match status" value="1"/>
</dbReference>
<dbReference type="PIRSF" id="PIRSF001365">
    <property type="entry name" value="DHDPS"/>
    <property type="match status" value="1"/>
</dbReference>
<dbReference type="PRINTS" id="PR00146">
    <property type="entry name" value="DHPICSNTHASE"/>
</dbReference>
<dbReference type="SMART" id="SM01130">
    <property type="entry name" value="DHDPS"/>
    <property type="match status" value="1"/>
</dbReference>
<dbReference type="SUPFAM" id="SSF51569">
    <property type="entry name" value="Aldolase"/>
    <property type="match status" value="1"/>
</dbReference>
<dbReference type="PROSITE" id="PS00665">
    <property type="entry name" value="DHDPS_1"/>
    <property type="match status" value="1"/>
</dbReference>
<dbReference type="PROSITE" id="PS00666">
    <property type="entry name" value="DHDPS_2"/>
    <property type="match status" value="1"/>
</dbReference>
<protein>
    <recommendedName>
        <fullName evidence="1">4-hydroxy-tetrahydrodipicolinate synthase</fullName>
        <shortName evidence="1">HTPA synthase</shortName>
        <ecNumber evidence="1">4.3.3.7</ecNumber>
    </recommendedName>
</protein>
<feature type="chain" id="PRO_0000103145" description="4-hydroxy-tetrahydrodipicolinate synthase">
    <location>
        <begin position="1"/>
        <end position="294"/>
    </location>
</feature>
<feature type="active site" description="Proton donor/acceptor" evidence="1">
    <location>
        <position position="135"/>
    </location>
</feature>
<feature type="active site" description="Schiff-base intermediate with substrate" evidence="1">
    <location>
        <position position="163"/>
    </location>
</feature>
<feature type="binding site" evidence="1">
    <location>
        <position position="47"/>
    </location>
    <ligand>
        <name>pyruvate</name>
        <dbReference type="ChEBI" id="CHEBI:15361"/>
    </ligand>
</feature>
<feature type="binding site" evidence="1">
    <location>
        <position position="205"/>
    </location>
    <ligand>
        <name>pyruvate</name>
        <dbReference type="ChEBI" id="CHEBI:15361"/>
    </ligand>
</feature>
<feature type="site" description="Part of a proton relay during catalysis" evidence="1">
    <location>
        <position position="46"/>
    </location>
</feature>
<feature type="site" description="Part of a proton relay during catalysis" evidence="1">
    <location>
        <position position="109"/>
    </location>
</feature>
<reference key="1">
    <citation type="journal article" date="2001" name="Mol. Biol. Evol.">
        <title>Pseudogenes, junk DNA, and the dynamics of Rickettsia genomes.</title>
        <authorList>
            <person name="Andersson J.O."/>
            <person name="Andersson S.G.E."/>
        </authorList>
    </citation>
    <scope>NUCLEOTIDE SEQUENCE [GENOMIC DNA]</scope>
</reference>
<comment type="function">
    <text evidence="1">Catalyzes the condensation of (S)-aspartate-beta-semialdehyde [(S)-ASA] and pyruvate to 4-hydroxy-tetrahydrodipicolinate (HTPA).</text>
</comment>
<comment type="catalytic activity">
    <reaction evidence="1">
        <text>L-aspartate 4-semialdehyde + pyruvate = (2S,4S)-4-hydroxy-2,3,4,5-tetrahydrodipicolinate + H2O + H(+)</text>
        <dbReference type="Rhea" id="RHEA:34171"/>
        <dbReference type="ChEBI" id="CHEBI:15361"/>
        <dbReference type="ChEBI" id="CHEBI:15377"/>
        <dbReference type="ChEBI" id="CHEBI:15378"/>
        <dbReference type="ChEBI" id="CHEBI:67139"/>
        <dbReference type="ChEBI" id="CHEBI:537519"/>
        <dbReference type="EC" id="4.3.3.7"/>
    </reaction>
</comment>
<comment type="pathway">
    <text evidence="1">Amino-acid biosynthesis; L-lysine biosynthesis via DAP pathway; (S)-tetrahydrodipicolinate from L-aspartate: step 3/4.</text>
</comment>
<comment type="subunit">
    <text evidence="1">Homotetramer; dimer of dimers.</text>
</comment>
<comment type="subcellular location">
    <subcellularLocation>
        <location evidence="1">Cytoplasm</location>
    </subcellularLocation>
</comment>
<comment type="similarity">
    <text evidence="1">Belongs to the DapA family.</text>
</comment>
<comment type="caution">
    <text evidence="2">Was originally thought to be a dihydrodipicolinate synthase (DHDPS), catalyzing the condensation of (S)-aspartate-beta-semialdehyde [(S)-ASA] and pyruvate to dihydrodipicolinate (DHDP). However, it was shown in E.coli that the product of the enzymatic reaction is not dihydrodipicolinate but in fact (4S)-4-hydroxy-2,3,4,5-tetrahydro-(2S)-dipicolinic acid (HTPA), and that the consecutive dehydration reaction leading to DHDP is not spontaneous but catalyzed by DapB.</text>
</comment>
<sequence length="294" mass="32518">MHNIFKGLITALITPFKDNKLDLYALERIIKHQIKHEVDAVLIAGSTGESSSLSFEEYKLLLQTSVEIVNKCIPIISGCSSNNTTYARALAAESTKIGVDGFMASPPSYVKPTQHGIYKHFEALHEVCNLPIMLYSAPTRSGVDFSDETILRLSKLPRILALKDCGVDLERPLRIRATVKKDFNILTGNDEVVLAFNAQGGVGWTSVASNIVPNICKELLEKWNKNDTKGALEIHQKLLPLYTALFVESNPIPIKYAAHYLGLCENEIRPPLTEASDSAKKQIENIITSLSIKI</sequence>
<accession>Q9AKQ3</accession>
<gene>
    <name evidence="1" type="primary">dapA</name>
</gene>
<proteinExistence type="inferred from homology"/>